<proteinExistence type="evidence at protein level"/>
<dbReference type="EC" id="3.5.99.7"/>
<dbReference type="PIR" id="PW0041">
    <property type="entry name" value="PW0041"/>
</dbReference>
<dbReference type="PDB" id="1F2D">
    <property type="method" value="X-ray"/>
    <property type="resolution" value="2.00 A"/>
    <property type="chains" value="A/B/C/D=2-341"/>
</dbReference>
<dbReference type="PDB" id="1J0C">
    <property type="method" value="X-ray"/>
    <property type="resolution" value="2.75 A"/>
    <property type="chains" value="A/B/C/D=1-341"/>
</dbReference>
<dbReference type="PDB" id="1J0D">
    <property type="method" value="X-ray"/>
    <property type="resolution" value="2.20 A"/>
    <property type="chains" value="A/B/C/D=1-341"/>
</dbReference>
<dbReference type="PDB" id="1J0E">
    <property type="method" value="X-ray"/>
    <property type="resolution" value="2.45 A"/>
    <property type="chains" value="A/B/C/D=1-341"/>
</dbReference>
<dbReference type="PDBsum" id="1F2D"/>
<dbReference type="PDBsum" id="1J0C"/>
<dbReference type="PDBsum" id="1J0D"/>
<dbReference type="PDBsum" id="1J0E"/>
<dbReference type="SMR" id="Q7M523"/>
<dbReference type="iPTMnet" id="Q7M523"/>
<dbReference type="BRENDA" id="3.5.99.7">
    <property type="organism ID" value="2588"/>
</dbReference>
<dbReference type="EvolutionaryTrace" id="Q7M523"/>
<dbReference type="GO" id="GO:0008660">
    <property type="term" value="F:1-aminocyclopropane-1-carboxylate deaminase activity"/>
    <property type="evidence" value="ECO:0007669"/>
    <property type="project" value="UniProtKB-EC"/>
</dbReference>
<dbReference type="GO" id="GO:0019148">
    <property type="term" value="F:D-cysteine desulfhydrase activity"/>
    <property type="evidence" value="ECO:0007669"/>
    <property type="project" value="TreeGrafter"/>
</dbReference>
<dbReference type="GO" id="GO:0030170">
    <property type="term" value="F:pyridoxal phosphate binding"/>
    <property type="evidence" value="ECO:0007669"/>
    <property type="project" value="InterPro"/>
</dbReference>
<dbReference type="GO" id="GO:0009310">
    <property type="term" value="P:amine catabolic process"/>
    <property type="evidence" value="ECO:0007669"/>
    <property type="project" value="InterPro"/>
</dbReference>
<dbReference type="CDD" id="cd06449">
    <property type="entry name" value="ACCD"/>
    <property type="match status" value="1"/>
</dbReference>
<dbReference type="Gene3D" id="3.40.50.1100">
    <property type="match status" value="2"/>
</dbReference>
<dbReference type="InterPro" id="IPR027278">
    <property type="entry name" value="ACCD_DCysDesulf"/>
</dbReference>
<dbReference type="InterPro" id="IPR005965">
    <property type="entry name" value="ACP_carboxylate_deaminase"/>
</dbReference>
<dbReference type="InterPro" id="IPR001926">
    <property type="entry name" value="TrpB-like_PALP"/>
</dbReference>
<dbReference type="InterPro" id="IPR036052">
    <property type="entry name" value="TrpB-like_PALP_sf"/>
</dbReference>
<dbReference type="NCBIfam" id="TIGR01274">
    <property type="entry name" value="ACC_deam"/>
    <property type="match status" value="1"/>
</dbReference>
<dbReference type="PANTHER" id="PTHR43780">
    <property type="entry name" value="1-AMINOCYCLOPROPANE-1-CARBOXYLATE DEAMINASE-RELATED"/>
    <property type="match status" value="1"/>
</dbReference>
<dbReference type="PANTHER" id="PTHR43780:SF2">
    <property type="entry name" value="1-AMINOCYCLOPROPANE-1-CARBOXYLATE DEAMINASE-RELATED"/>
    <property type="match status" value="1"/>
</dbReference>
<dbReference type="Pfam" id="PF00291">
    <property type="entry name" value="PALP"/>
    <property type="match status" value="1"/>
</dbReference>
<dbReference type="PIRSF" id="PIRSF006278">
    <property type="entry name" value="ACCD_DCysDesulf"/>
    <property type="match status" value="1"/>
</dbReference>
<dbReference type="SUPFAM" id="SSF53686">
    <property type="entry name" value="Tryptophan synthase beta subunit-like PLP-dependent enzymes"/>
    <property type="match status" value="1"/>
</dbReference>
<comment type="function">
    <text>Catalyzes a cyclopropane ring-opening reaction, the irreversible conversion of 1-aminocyclopropane-1-carboxylate (ACC) to ammonia and alpha-ketobutyrate.</text>
</comment>
<comment type="catalytic activity">
    <reaction>
        <text>1-aminocyclopropane-1-carboxylate + H2O = 2-oxobutanoate + NH4(+)</text>
        <dbReference type="Rhea" id="RHEA:16933"/>
        <dbReference type="ChEBI" id="CHEBI:15377"/>
        <dbReference type="ChEBI" id="CHEBI:16763"/>
        <dbReference type="ChEBI" id="CHEBI:28938"/>
        <dbReference type="ChEBI" id="CHEBI:58360"/>
        <dbReference type="EC" id="3.5.99.7"/>
    </reaction>
</comment>
<comment type="cofactor">
    <cofactor>
        <name>pyridoxal 5'-phosphate</name>
        <dbReference type="ChEBI" id="CHEBI:597326"/>
    </cofactor>
</comment>
<comment type="subunit">
    <text>Homodimer.</text>
</comment>
<comment type="similarity">
    <text evidence="2">Belongs to the ACC deaminase/D-cysteine desulfhydrase family.</text>
</comment>
<name>1A1D_CYBSA</name>
<accession>Q7M523</accession>
<protein>
    <recommendedName>
        <fullName>1-aminocyclopropane-1-carboxylate deaminase</fullName>
        <shortName>ACC deaminase</shortName>
        <shortName>ACCD</shortName>
        <ecNumber>3.5.99.7</ecNumber>
    </recommendedName>
</protein>
<sequence length="341" mass="37061">SGVAKFAKYPLTFGPSPISNLNRLSQHLGSKVNVYAKREDCNSGLAFGGNKLRKLEYIVPDIVEGDYTHLVSIGGRQSNQTRMVAALAAKLGKKCVLIQEDWVPIPEAEKDVYNRVGNIELSRIMGADVRVIEDGFDIGMRKSFANALQELEDAGHKPYPIPAGCSEHKYGGLGFVGFADEVINQEVELGIKFDKIVVCCVTGSTTAGILAGMAQYGRQDDVIAIDASFTSEKTKEQTLRIANNTAKLIGVEHEFKDFTLDTRFAYPCYGVPNEGTIEAIRTCAEQEGVLTDPVYEGKSMQGLIALIKEDYFKPGANVLYVHLGGAPALSAYSSFFPTKTA</sequence>
<keyword id="KW-0002">3D-structure</keyword>
<keyword id="KW-0007">Acetylation</keyword>
<keyword id="KW-0378">Hydrolase</keyword>
<keyword id="KW-0663">Pyridoxal phosphate</keyword>
<evidence type="ECO:0000269" key="1">
    <source>
    </source>
</evidence>
<evidence type="ECO:0000305" key="2"/>
<evidence type="ECO:0007829" key="3">
    <source>
        <dbReference type="PDB" id="1F2D"/>
    </source>
</evidence>
<evidence type="ECO:0007829" key="4">
    <source>
        <dbReference type="PDB" id="1J0C"/>
    </source>
</evidence>
<organism>
    <name type="scientific">Cyberlindnera saturnus</name>
    <name type="common">Yeast</name>
    <name type="synonym">Williopsis saturnus</name>
    <dbReference type="NCBI Taxonomy" id="907340"/>
    <lineage>
        <taxon>Eukaryota</taxon>
        <taxon>Fungi</taxon>
        <taxon>Dikarya</taxon>
        <taxon>Ascomycota</taxon>
        <taxon>Saccharomycotina</taxon>
        <taxon>Saccharomycetes</taxon>
        <taxon>Phaffomycetales</taxon>
        <taxon>Phaffomycetaceae</taxon>
        <taxon>Cyberlindnera</taxon>
    </lineage>
</organism>
<reference key="1">
    <citation type="journal article" date="1998" name="J. Biochem.">
        <title>Properties, sequence, and synthesis in Escherichia coli of 1-aminocyclopropane-1-carboxylate deaminase from Hansenula saturnus.</title>
        <authorList>
            <person name="Minami R."/>
            <person name="Uchiyama K."/>
            <person name="Murakami T."/>
            <person name="Kawai J."/>
            <person name="Mikami K."/>
            <person name="Yamada T."/>
            <person name="Yokoi D."/>
            <person name="Ito H."/>
            <person name="Matsui H."/>
            <person name="Honma M."/>
        </authorList>
    </citation>
    <scope>NUCLEOTIDE SEQUENCE</scope>
    <scope>CHARACTERIZATION</scope>
    <scope>ACETYLATION AT SER-1</scope>
</reference>
<reference key="2">
    <citation type="journal article" date="2000" name="J. Biol. Chem.">
        <title>Crystal structure of 1-aminocyclopropane-1-carboxylate deaminase from Hansenula saturnus.</title>
        <authorList>
            <person name="Yao M."/>
            <person name="Ose T."/>
            <person name="Sugimoto H."/>
            <person name="Horiuchi A."/>
            <person name="Nakagawa A."/>
            <person name="Wakatsuki S."/>
            <person name="Yokoi D."/>
            <person name="Murakami T."/>
            <person name="Honma M."/>
            <person name="Tanaka I."/>
        </authorList>
    </citation>
    <scope>X-RAY CRYSTALLOGRAPHY (2.0 ANGSTROMS)</scope>
</reference>
<reference key="3">
    <citation type="journal article" date="2003" name="J. Biol. Chem.">
        <title>Reaction intermediate structures of 1-aminocyclopropane-1-carboxylate deaminase: insight into PLP-dependent cyclopropane ring-opening reaction.</title>
        <authorList>
            <person name="Ose T."/>
            <person name="Fujino A."/>
            <person name="Yao M."/>
            <person name="Watanabe N."/>
            <person name="Honma M."/>
            <person name="Tanaka I."/>
        </authorList>
    </citation>
    <scope>X-RAY CRYSTALLOGRAPHY (2.75 ANGSTROMS)</scope>
</reference>
<feature type="chain" id="PRO_0000184512" description="1-aminocyclopropane-1-carboxylate deaminase">
    <location>
        <begin position="1"/>
        <end position="341"/>
    </location>
</feature>
<feature type="active site" description="Nucleophile">
    <location>
        <position position="78"/>
    </location>
</feature>
<feature type="modified residue" description="N-acetylserine" evidence="1">
    <location>
        <position position="1"/>
    </location>
</feature>
<feature type="modified residue" description="N6-(pyridoxal phosphate)lysine">
    <location>
        <position position="51"/>
    </location>
</feature>
<feature type="turn" evidence="4">
    <location>
        <begin position="2"/>
        <end position="4"/>
    </location>
</feature>
<feature type="strand" evidence="3">
    <location>
        <begin position="12"/>
        <end position="15"/>
    </location>
</feature>
<feature type="strand" evidence="3">
    <location>
        <begin position="18"/>
        <end position="20"/>
    </location>
</feature>
<feature type="helix" evidence="3">
    <location>
        <begin position="22"/>
        <end position="27"/>
    </location>
</feature>
<feature type="turn" evidence="3">
    <location>
        <begin position="28"/>
        <end position="30"/>
    </location>
</feature>
<feature type="strand" evidence="3">
    <location>
        <begin position="32"/>
        <end position="38"/>
    </location>
</feature>
<feature type="helix" evidence="3">
    <location>
        <begin position="39"/>
        <end position="41"/>
    </location>
</feature>
<feature type="helix" evidence="3">
    <location>
        <begin position="50"/>
        <end position="55"/>
    </location>
</feature>
<feature type="turn" evidence="3">
    <location>
        <begin position="56"/>
        <end position="58"/>
    </location>
</feature>
<feature type="helix" evidence="3">
    <location>
        <begin position="59"/>
        <end position="64"/>
    </location>
</feature>
<feature type="strand" evidence="3">
    <location>
        <begin position="68"/>
        <end position="75"/>
    </location>
</feature>
<feature type="helix" evidence="3">
    <location>
        <begin position="79"/>
        <end position="91"/>
    </location>
</feature>
<feature type="strand" evidence="3">
    <location>
        <begin position="94"/>
        <end position="100"/>
    </location>
</feature>
<feature type="helix" evidence="3">
    <location>
        <begin position="107"/>
        <end position="109"/>
    </location>
</feature>
<feature type="turn" evidence="3">
    <location>
        <begin position="110"/>
        <end position="115"/>
    </location>
</feature>
<feature type="helix" evidence="3">
    <location>
        <begin position="117"/>
        <end position="124"/>
    </location>
</feature>
<feature type="strand" evidence="3">
    <location>
        <begin position="128"/>
        <end position="131"/>
    </location>
</feature>
<feature type="helix" evidence="3">
    <location>
        <begin position="142"/>
        <end position="153"/>
    </location>
</feature>
<feature type="strand" evidence="3">
    <location>
        <begin position="158"/>
        <end position="161"/>
    </location>
</feature>
<feature type="helix" evidence="3">
    <location>
        <begin position="163"/>
        <end position="165"/>
    </location>
</feature>
<feature type="turn" evidence="3">
    <location>
        <begin position="169"/>
        <end position="173"/>
    </location>
</feature>
<feature type="helix" evidence="3">
    <location>
        <begin position="174"/>
        <end position="189"/>
    </location>
</feature>
<feature type="strand" evidence="3">
    <location>
        <begin position="194"/>
        <end position="203"/>
    </location>
</feature>
<feature type="helix" evidence="3">
    <location>
        <begin position="204"/>
        <end position="213"/>
    </location>
</feature>
<feature type="helix" evidence="3">
    <location>
        <begin position="214"/>
        <end position="216"/>
    </location>
</feature>
<feature type="helix" evidence="3">
    <location>
        <begin position="219"/>
        <end position="221"/>
    </location>
</feature>
<feature type="strand" evidence="3">
    <location>
        <begin position="222"/>
        <end position="226"/>
    </location>
</feature>
<feature type="helix" evidence="3">
    <location>
        <begin position="231"/>
        <end position="249"/>
    </location>
</feature>
<feature type="helix" evidence="3">
    <location>
        <begin position="274"/>
        <end position="287"/>
    </location>
</feature>
<feature type="turn" evidence="3">
    <location>
        <begin position="293"/>
        <end position="295"/>
    </location>
</feature>
<feature type="helix" evidence="3">
    <location>
        <begin position="296"/>
        <end position="308"/>
    </location>
</feature>
<feature type="strand" evidence="3">
    <location>
        <begin position="317"/>
        <end position="322"/>
    </location>
</feature>
<feature type="helix" evidence="3">
    <location>
        <begin position="326"/>
        <end position="335"/>
    </location>
</feature>